<name>ERA_XANOR</name>
<protein>
    <recommendedName>
        <fullName evidence="1">GTPase Era</fullName>
    </recommendedName>
</protein>
<feature type="chain" id="PRO_1000079771" description="GTPase Era">
    <location>
        <begin position="1"/>
        <end position="299"/>
    </location>
</feature>
<feature type="domain" description="Era-type G" evidence="2">
    <location>
        <begin position="9"/>
        <end position="177"/>
    </location>
</feature>
<feature type="domain" description="KH type-2" evidence="1">
    <location>
        <begin position="200"/>
        <end position="284"/>
    </location>
</feature>
<feature type="region of interest" description="G1" evidence="2">
    <location>
        <begin position="17"/>
        <end position="24"/>
    </location>
</feature>
<feature type="region of interest" description="G2" evidence="2">
    <location>
        <begin position="43"/>
        <end position="47"/>
    </location>
</feature>
<feature type="region of interest" description="G3" evidence="2">
    <location>
        <begin position="64"/>
        <end position="67"/>
    </location>
</feature>
<feature type="region of interest" description="G4" evidence="2">
    <location>
        <begin position="126"/>
        <end position="129"/>
    </location>
</feature>
<feature type="region of interest" description="G5" evidence="2">
    <location>
        <begin position="156"/>
        <end position="158"/>
    </location>
</feature>
<feature type="binding site" evidence="1">
    <location>
        <begin position="17"/>
        <end position="24"/>
    </location>
    <ligand>
        <name>GTP</name>
        <dbReference type="ChEBI" id="CHEBI:37565"/>
    </ligand>
</feature>
<feature type="binding site" evidence="1">
    <location>
        <begin position="64"/>
        <end position="68"/>
    </location>
    <ligand>
        <name>GTP</name>
        <dbReference type="ChEBI" id="CHEBI:37565"/>
    </ligand>
</feature>
<feature type="binding site" evidence="1">
    <location>
        <begin position="126"/>
        <end position="129"/>
    </location>
    <ligand>
        <name>GTP</name>
        <dbReference type="ChEBI" id="CHEBI:37565"/>
    </ligand>
</feature>
<sequence length="299" mass="32800">MSVTSSPHRSGSVAVIGRPNVGKSTLTNALVGAKVSIVSNRPQTTRHRLLGIATFPEGQLVLVDTPGLHREQKRAMNRVMNRAARGSLEGVDAAVLVIEAGRWDEEDTLAFRVLSDAEVPVVLVVNKVDRLKDKTALLPFLAQVSEGRTFAAVHPVSALKRKGLEALVGDLLKLVPEAEAMFGEDEITDRSQRFLAGELVREQLMRQLGEELPYATTVEIERFAEDGALLRIGAVIWVEREGQKAIVIGKGGTRLKEIGGKARLQMERLFGAKVFLETWVRVREGWSDDEAALKAFGYE</sequence>
<keyword id="KW-0997">Cell inner membrane</keyword>
<keyword id="KW-1003">Cell membrane</keyword>
<keyword id="KW-0963">Cytoplasm</keyword>
<keyword id="KW-0342">GTP-binding</keyword>
<keyword id="KW-0472">Membrane</keyword>
<keyword id="KW-0547">Nucleotide-binding</keyword>
<keyword id="KW-1185">Reference proteome</keyword>
<keyword id="KW-0690">Ribosome biogenesis</keyword>
<keyword id="KW-0694">RNA-binding</keyword>
<keyword id="KW-0699">rRNA-binding</keyword>
<proteinExistence type="inferred from homology"/>
<dbReference type="EMBL" id="AE013598">
    <property type="protein sequence ID" value="AAW75110.1"/>
    <property type="molecule type" value="Genomic_DNA"/>
</dbReference>
<dbReference type="SMR" id="Q5H1R1"/>
<dbReference type="STRING" id="291331.XOO1856"/>
<dbReference type="KEGG" id="xoo:XOO1856"/>
<dbReference type="HOGENOM" id="CLU_038009_1_2_6"/>
<dbReference type="Proteomes" id="UP000006735">
    <property type="component" value="Chromosome"/>
</dbReference>
<dbReference type="GO" id="GO:0005829">
    <property type="term" value="C:cytosol"/>
    <property type="evidence" value="ECO:0007669"/>
    <property type="project" value="TreeGrafter"/>
</dbReference>
<dbReference type="GO" id="GO:0005886">
    <property type="term" value="C:plasma membrane"/>
    <property type="evidence" value="ECO:0007669"/>
    <property type="project" value="UniProtKB-SubCell"/>
</dbReference>
<dbReference type="GO" id="GO:0005525">
    <property type="term" value="F:GTP binding"/>
    <property type="evidence" value="ECO:0007669"/>
    <property type="project" value="UniProtKB-UniRule"/>
</dbReference>
<dbReference type="GO" id="GO:0003924">
    <property type="term" value="F:GTPase activity"/>
    <property type="evidence" value="ECO:0007669"/>
    <property type="project" value="UniProtKB-UniRule"/>
</dbReference>
<dbReference type="GO" id="GO:0043024">
    <property type="term" value="F:ribosomal small subunit binding"/>
    <property type="evidence" value="ECO:0007669"/>
    <property type="project" value="TreeGrafter"/>
</dbReference>
<dbReference type="GO" id="GO:0070181">
    <property type="term" value="F:small ribosomal subunit rRNA binding"/>
    <property type="evidence" value="ECO:0007669"/>
    <property type="project" value="UniProtKB-UniRule"/>
</dbReference>
<dbReference type="GO" id="GO:0000028">
    <property type="term" value="P:ribosomal small subunit assembly"/>
    <property type="evidence" value="ECO:0007669"/>
    <property type="project" value="TreeGrafter"/>
</dbReference>
<dbReference type="CDD" id="cd04163">
    <property type="entry name" value="Era"/>
    <property type="match status" value="1"/>
</dbReference>
<dbReference type="CDD" id="cd22534">
    <property type="entry name" value="KH-II_Era"/>
    <property type="match status" value="1"/>
</dbReference>
<dbReference type="FunFam" id="3.30.300.20:FF:000003">
    <property type="entry name" value="GTPase Era"/>
    <property type="match status" value="1"/>
</dbReference>
<dbReference type="FunFam" id="3.40.50.300:FF:001543">
    <property type="entry name" value="GTPase Era"/>
    <property type="match status" value="1"/>
</dbReference>
<dbReference type="Gene3D" id="3.30.300.20">
    <property type="match status" value="1"/>
</dbReference>
<dbReference type="Gene3D" id="3.40.50.300">
    <property type="entry name" value="P-loop containing nucleotide triphosphate hydrolases"/>
    <property type="match status" value="1"/>
</dbReference>
<dbReference type="HAMAP" id="MF_00367">
    <property type="entry name" value="GTPase_Era"/>
    <property type="match status" value="1"/>
</dbReference>
<dbReference type="InterPro" id="IPR030388">
    <property type="entry name" value="G_ERA_dom"/>
</dbReference>
<dbReference type="InterPro" id="IPR006073">
    <property type="entry name" value="GTP-bd"/>
</dbReference>
<dbReference type="InterPro" id="IPR005662">
    <property type="entry name" value="GTPase_Era-like"/>
</dbReference>
<dbReference type="InterPro" id="IPR015946">
    <property type="entry name" value="KH_dom-like_a/b"/>
</dbReference>
<dbReference type="InterPro" id="IPR004044">
    <property type="entry name" value="KH_dom_type_2"/>
</dbReference>
<dbReference type="InterPro" id="IPR009019">
    <property type="entry name" value="KH_sf_prok-type"/>
</dbReference>
<dbReference type="InterPro" id="IPR027417">
    <property type="entry name" value="P-loop_NTPase"/>
</dbReference>
<dbReference type="InterPro" id="IPR005225">
    <property type="entry name" value="Small_GTP-bd"/>
</dbReference>
<dbReference type="NCBIfam" id="TIGR00436">
    <property type="entry name" value="era"/>
    <property type="match status" value="1"/>
</dbReference>
<dbReference type="NCBIfam" id="NF000908">
    <property type="entry name" value="PRK00089.1"/>
    <property type="match status" value="1"/>
</dbReference>
<dbReference type="NCBIfam" id="TIGR00231">
    <property type="entry name" value="small_GTP"/>
    <property type="match status" value="1"/>
</dbReference>
<dbReference type="PANTHER" id="PTHR42698">
    <property type="entry name" value="GTPASE ERA"/>
    <property type="match status" value="1"/>
</dbReference>
<dbReference type="PANTHER" id="PTHR42698:SF1">
    <property type="entry name" value="GTPASE ERA, MITOCHONDRIAL"/>
    <property type="match status" value="1"/>
</dbReference>
<dbReference type="Pfam" id="PF07650">
    <property type="entry name" value="KH_2"/>
    <property type="match status" value="1"/>
</dbReference>
<dbReference type="Pfam" id="PF01926">
    <property type="entry name" value="MMR_HSR1"/>
    <property type="match status" value="1"/>
</dbReference>
<dbReference type="PRINTS" id="PR00326">
    <property type="entry name" value="GTP1OBG"/>
</dbReference>
<dbReference type="SUPFAM" id="SSF52540">
    <property type="entry name" value="P-loop containing nucleoside triphosphate hydrolases"/>
    <property type="match status" value="1"/>
</dbReference>
<dbReference type="SUPFAM" id="SSF54814">
    <property type="entry name" value="Prokaryotic type KH domain (KH-domain type II)"/>
    <property type="match status" value="1"/>
</dbReference>
<dbReference type="PROSITE" id="PS51713">
    <property type="entry name" value="G_ERA"/>
    <property type="match status" value="1"/>
</dbReference>
<dbReference type="PROSITE" id="PS50823">
    <property type="entry name" value="KH_TYPE_2"/>
    <property type="match status" value="1"/>
</dbReference>
<evidence type="ECO:0000255" key="1">
    <source>
        <dbReference type="HAMAP-Rule" id="MF_00367"/>
    </source>
</evidence>
<evidence type="ECO:0000255" key="2">
    <source>
        <dbReference type="PROSITE-ProRule" id="PRU01050"/>
    </source>
</evidence>
<organism>
    <name type="scientific">Xanthomonas oryzae pv. oryzae (strain KACC10331 / KXO85)</name>
    <dbReference type="NCBI Taxonomy" id="291331"/>
    <lineage>
        <taxon>Bacteria</taxon>
        <taxon>Pseudomonadati</taxon>
        <taxon>Pseudomonadota</taxon>
        <taxon>Gammaproteobacteria</taxon>
        <taxon>Lysobacterales</taxon>
        <taxon>Lysobacteraceae</taxon>
        <taxon>Xanthomonas</taxon>
    </lineage>
</organism>
<comment type="function">
    <text evidence="1">An essential GTPase that binds both GDP and GTP, with rapid nucleotide exchange. Plays a role in 16S rRNA processing and 30S ribosomal subunit biogenesis and possibly also in cell cycle regulation and energy metabolism.</text>
</comment>
<comment type="subunit">
    <text evidence="1">Monomer.</text>
</comment>
<comment type="subcellular location">
    <subcellularLocation>
        <location>Cytoplasm</location>
    </subcellularLocation>
    <subcellularLocation>
        <location evidence="1">Cell inner membrane</location>
        <topology evidence="1">Peripheral membrane protein</topology>
    </subcellularLocation>
</comment>
<comment type="similarity">
    <text evidence="1 2">Belongs to the TRAFAC class TrmE-Era-EngA-EngB-Septin-like GTPase superfamily. Era GTPase family.</text>
</comment>
<accession>Q5H1R1</accession>
<reference key="1">
    <citation type="journal article" date="2005" name="Nucleic Acids Res.">
        <title>The genome sequence of Xanthomonas oryzae pathovar oryzae KACC10331, the bacterial blight pathogen of rice.</title>
        <authorList>
            <person name="Lee B.-M."/>
            <person name="Park Y.-J."/>
            <person name="Park D.-S."/>
            <person name="Kang H.-W."/>
            <person name="Kim J.-G."/>
            <person name="Song E.-S."/>
            <person name="Park I.-C."/>
            <person name="Yoon U.-H."/>
            <person name="Hahn J.-H."/>
            <person name="Koo B.-S."/>
            <person name="Lee G.-B."/>
            <person name="Kim H."/>
            <person name="Park H.-S."/>
            <person name="Yoon K.-O."/>
            <person name="Kim J.-H."/>
            <person name="Jung C.-H."/>
            <person name="Koh N.-H."/>
            <person name="Seo J.-S."/>
            <person name="Go S.-J."/>
        </authorList>
    </citation>
    <scope>NUCLEOTIDE SEQUENCE [LARGE SCALE GENOMIC DNA]</scope>
    <source>
        <strain>KACC10331 / KXO85</strain>
    </source>
</reference>
<gene>
    <name evidence="1" type="primary">era</name>
    <name type="ordered locus">XOO1856</name>
</gene>